<dbReference type="EMBL" id="BA000037">
    <property type="protein sequence ID" value="BAC95773.1"/>
    <property type="molecule type" value="Genomic_DNA"/>
</dbReference>
<dbReference type="RefSeq" id="WP_011079338.1">
    <property type="nucleotide sequence ID" value="NC_005139.1"/>
</dbReference>
<dbReference type="SMR" id="Q7MH63"/>
<dbReference type="STRING" id="672.VV93_v1c27370"/>
<dbReference type="GeneID" id="93895627"/>
<dbReference type="KEGG" id="vvy:VV3009"/>
<dbReference type="eggNOG" id="COG3060">
    <property type="taxonomic scope" value="Bacteria"/>
</dbReference>
<dbReference type="HOGENOM" id="CLU_142318_0_0_6"/>
<dbReference type="Proteomes" id="UP000002675">
    <property type="component" value="Chromosome I"/>
</dbReference>
<dbReference type="GO" id="GO:0005737">
    <property type="term" value="C:cytoplasm"/>
    <property type="evidence" value="ECO:0007669"/>
    <property type="project" value="UniProtKB-SubCell"/>
</dbReference>
<dbReference type="GO" id="GO:0003677">
    <property type="term" value="F:DNA binding"/>
    <property type="evidence" value="ECO:0007669"/>
    <property type="project" value="UniProtKB-KW"/>
</dbReference>
<dbReference type="GO" id="GO:0003700">
    <property type="term" value="F:DNA-binding transcription factor activity"/>
    <property type="evidence" value="ECO:0007669"/>
    <property type="project" value="InterPro"/>
</dbReference>
<dbReference type="GO" id="GO:0009086">
    <property type="term" value="P:methionine biosynthetic process"/>
    <property type="evidence" value="ECO:0007669"/>
    <property type="project" value="UniProtKB-UniRule"/>
</dbReference>
<dbReference type="GO" id="GO:0045892">
    <property type="term" value="P:negative regulation of DNA-templated transcription"/>
    <property type="evidence" value="ECO:0007669"/>
    <property type="project" value="UniProtKB-UniRule"/>
</dbReference>
<dbReference type="CDD" id="cd00490">
    <property type="entry name" value="Met_repressor_MetJ"/>
    <property type="match status" value="1"/>
</dbReference>
<dbReference type="FunFam" id="1.10.140.10:FF:000001">
    <property type="entry name" value="Met repressor"/>
    <property type="match status" value="1"/>
</dbReference>
<dbReference type="Gene3D" id="1.10.140.10">
    <property type="entry name" value="MET Apo-Repressor, subunit A"/>
    <property type="match status" value="1"/>
</dbReference>
<dbReference type="HAMAP" id="MF_00744">
    <property type="entry name" value="MetJ"/>
    <property type="match status" value="1"/>
</dbReference>
<dbReference type="InterPro" id="IPR002084">
    <property type="entry name" value="Met_repressor_MetJ"/>
</dbReference>
<dbReference type="InterPro" id="IPR023453">
    <property type="entry name" value="Met_repressor_MetJ_dom_sf"/>
</dbReference>
<dbReference type="InterPro" id="IPR010985">
    <property type="entry name" value="Ribbon_hlx_hlx"/>
</dbReference>
<dbReference type="NCBIfam" id="NF003622">
    <property type="entry name" value="PRK05264.1"/>
    <property type="match status" value="1"/>
</dbReference>
<dbReference type="Pfam" id="PF01340">
    <property type="entry name" value="MetJ"/>
    <property type="match status" value="1"/>
</dbReference>
<dbReference type="SUPFAM" id="SSF47598">
    <property type="entry name" value="Ribbon-helix-helix"/>
    <property type="match status" value="1"/>
</dbReference>
<proteinExistence type="inferred from homology"/>
<sequence length="105" mass="12063">MADWNGEYISPYAEHGKKSEQVKKITVSIPLKVLKVLTDERTRRQINNLRHATNSELLCEAFLHAYTGQPLPTDEDLRKDRPDDIPTEAKELMTAMGIEFEAYDD</sequence>
<feature type="chain" id="PRO_0000198411" description="Met repressor">
    <location>
        <begin position="1"/>
        <end position="105"/>
    </location>
</feature>
<accession>Q7MH63</accession>
<evidence type="ECO:0000255" key="1">
    <source>
        <dbReference type="HAMAP-Rule" id="MF_00744"/>
    </source>
</evidence>
<comment type="function">
    <text evidence="1">This regulatory protein, when combined with SAM (S-adenosylmethionine) represses the expression of the methionine regulon and of enzymes involved in SAM synthesis.</text>
</comment>
<comment type="subunit">
    <text evidence="1">Homodimer.</text>
</comment>
<comment type="subcellular location">
    <subcellularLocation>
        <location evidence="1">Cytoplasm</location>
    </subcellularLocation>
</comment>
<comment type="domain">
    <text>Does not bind DNA by a helix-turn-helix motif.</text>
</comment>
<comment type="similarity">
    <text evidence="1">Belongs to the MetJ family.</text>
</comment>
<keyword id="KW-0028">Amino-acid biosynthesis</keyword>
<keyword id="KW-0963">Cytoplasm</keyword>
<keyword id="KW-0238">DNA-binding</keyword>
<keyword id="KW-0486">Methionine biosynthesis</keyword>
<keyword id="KW-0678">Repressor</keyword>
<keyword id="KW-0804">Transcription</keyword>
<keyword id="KW-0805">Transcription regulation</keyword>
<protein>
    <recommendedName>
        <fullName evidence="1">Met repressor</fullName>
    </recommendedName>
    <alternativeName>
        <fullName evidence="1">Met regulon regulatory protein MetJ</fullName>
    </alternativeName>
</protein>
<reference key="1">
    <citation type="journal article" date="2003" name="Genome Res.">
        <title>Comparative genome analysis of Vibrio vulnificus, a marine pathogen.</title>
        <authorList>
            <person name="Chen C.-Y."/>
            <person name="Wu K.-M."/>
            <person name="Chang Y.-C."/>
            <person name="Chang C.-H."/>
            <person name="Tsai H.-C."/>
            <person name="Liao T.-L."/>
            <person name="Liu Y.-M."/>
            <person name="Chen H.-J."/>
            <person name="Shen A.B.-T."/>
            <person name="Li J.-C."/>
            <person name="Su T.-L."/>
            <person name="Shao C.-P."/>
            <person name="Lee C.-T."/>
            <person name="Hor L.-I."/>
            <person name="Tsai S.-F."/>
        </authorList>
    </citation>
    <scope>NUCLEOTIDE SEQUENCE [LARGE SCALE GENOMIC DNA]</scope>
    <source>
        <strain>YJ016</strain>
    </source>
</reference>
<name>METJ_VIBVY</name>
<organism>
    <name type="scientific">Vibrio vulnificus (strain YJ016)</name>
    <dbReference type="NCBI Taxonomy" id="196600"/>
    <lineage>
        <taxon>Bacteria</taxon>
        <taxon>Pseudomonadati</taxon>
        <taxon>Pseudomonadota</taxon>
        <taxon>Gammaproteobacteria</taxon>
        <taxon>Vibrionales</taxon>
        <taxon>Vibrionaceae</taxon>
        <taxon>Vibrio</taxon>
    </lineage>
</organism>
<gene>
    <name evidence="1" type="primary">metJ</name>
    <name type="ordered locus">VV3009</name>
</gene>